<keyword id="KW-1185">Reference proteome</keyword>
<keyword id="KW-0677">Repeat</keyword>
<keyword id="KW-0804">Transcription</keyword>
<keyword id="KW-0805">Transcription regulation</keyword>
<keyword id="KW-0833">Ubl conjugation pathway</keyword>
<keyword id="KW-0853">WD repeat</keyword>
<protein>
    <recommendedName>
        <fullName>Probable E3 ubiquitin ligase complex SCF subunit sconB</fullName>
    </recommendedName>
    <alternativeName>
        <fullName>Sulfur controller B</fullName>
    </alternativeName>
    <alternativeName>
        <fullName>Sulfur metabolite repression control protein B</fullName>
    </alternativeName>
</protein>
<accession>A1DHW6</accession>
<gene>
    <name type="primary">sconB</name>
    <name type="ORF">NFIA_089300</name>
</gene>
<reference key="1">
    <citation type="journal article" date="2008" name="PLoS Genet.">
        <title>Genomic islands in the pathogenic filamentous fungus Aspergillus fumigatus.</title>
        <authorList>
            <person name="Fedorova N.D."/>
            <person name="Khaldi N."/>
            <person name="Joardar V.S."/>
            <person name="Maiti R."/>
            <person name="Amedeo P."/>
            <person name="Anderson M.J."/>
            <person name="Crabtree J."/>
            <person name="Silva J.C."/>
            <person name="Badger J.H."/>
            <person name="Albarraq A."/>
            <person name="Angiuoli S."/>
            <person name="Bussey H."/>
            <person name="Bowyer P."/>
            <person name="Cotty P.J."/>
            <person name="Dyer P.S."/>
            <person name="Egan A."/>
            <person name="Galens K."/>
            <person name="Fraser-Liggett C.M."/>
            <person name="Haas B.J."/>
            <person name="Inman J.M."/>
            <person name="Kent R."/>
            <person name="Lemieux S."/>
            <person name="Malavazi I."/>
            <person name="Orvis J."/>
            <person name="Roemer T."/>
            <person name="Ronning C.M."/>
            <person name="Sundaram J.P."/>
            <person name="Sutton G."/>
            <person name="Turner G."/>
            <person name="Venter J.C."/>
            <person name="White O.R."/>
            <person name="Whitty B.R."/>
            <person name="Youngman P."/>
            <person name="Wolfe K.H."/>
            <person name="Goldman G.H."/>
            <person name="Wortman J.R."/>
            <person name="Jiang B."/>
            <person name="Denning D.W."/>
            <person name="Nierman W.C."/>
        </authorList>
    </citation>
    <scope>NUCLEOTIDE SEQUENCE [LARGE SCALE GENOMIC DNA]</scope>
    <source>
        <strain>ATCC 1020 / DSM 3700 / CBS 544.65 / FGSC A1164 / JCM 1740 / NRRL 181 / WB 181</strain>
    </source>
</reference>
<organism>
    <name type="scientific">Neosartorya fischeri (strain ATCC 1020 / DSM 3700 / CBS 544.65 / FGSC A1164 / JCM 1740 / NRRL 181 / WB 181)</name>
    <name type="common">Aspergillus fischerianus</name>
    <dbReference type="NCBI Taxonomy" id="331117"/>
    <lineage>
        <taxon>Eukaryota</taxon>
        <taxon>Fungi</taxon>
        <taxon>Dikarya</taxon>
        <taxon>Ascomycota</taxon>
        <taxon>Pezizomycotina</taxon>
        <taxon>Eurotiomycetes</taxon>
        <taxon>Eurotiomycetidae</taxon>
        <taxon>Eurotiales</taxon>
        <taxon>Aspergillaceae</taxon>
        <taxon>Aspergillus</taxon>
        <taxon>Aspergillus subgen. Fumigati</taxon>
    </lineage>
</organism>
<name>SCONB_NEOFI</name>
<comment type="function">
    <text evidence="1">Component of the SCF(sconB) E3 ubiquitin ligase complex involved in the regulation of sulfur metabolite repression, probably by mediating the inactivation or degradation of the metR transcription factor.</text>
</comment>
<comment type="pathway">
    <text>Protein modification; protein ubiquitination.</text>
</comment>
<comment type="subunit">
    <text evidence="1">Component of the SCF(sconB) E3 ubiquitin ligase complex.</text>
</comment>
<comment type="similarity">
    <text evidence="4">Belongs to the WD repeat MET30/SCONB/SCON-2 family.</text>
</comment>
<proteinExistence type="inferred from homology"/>
<evidence type="ECO:0000250" key="1"/>
<evidence type="ECO:0000255" key="2">
    <source>
        <dbReference type="PROSITE-ProRule" id="PRU00080"/>
    </source>
</evidence>
<evidence type="ECO:0000256" key="3">
    <source>
        <dbReference type="SAM" id="MobiDB-lite"/>
    </source>
</evidence>
<evidence type="ECO:0000305" key="4"/>
<sequence length="689" mass="77242">MDAHELSFRDGHGSSTSTMKDECASEEKALYLPGDSSFASVFGPSETVEDVETGPESTQDKPHSFNTQKPIREKLAGKNVAPFLARHIPEQYAPLGSQTGQPVEISSANSKYCYRHRPDLKCRRQADEPTMDKLQRSDQQGIAHAWSIFSAAPAKHRKLILQGIMAQCCFPQLSFISATVRDLIRIDFLTALPPEISFKILCYLDTTSLCKAAQVSRRWRALADDDVVWHRMCEQHIHRKCKKCGWGLPLLDRKRLRESKREIERRAATWDVSEQPAETESNSATIDTAASGSKRKPESDKEDTAMVKRQCTSIVSQSEQNEDYFKTRYRPWKEVYKDRFKVGTNWKYGRCSIRVFKGHSNGIMCLQFEDNILATGSYDATIKIWDTETGEELRTLKGHRSGIRCLQFDDTKLISGSMDHTLKVWNWRTGECISTYSGHRGGVVGLHFDATILASGSVDKTVKIWNFEDKSTCLLRGHTDWVNAVRVDSASRTVFSASDDCTVKLWDLDTKSCIRTFHGHVGQVQQVVPLPREFEFEDHDVECENDNVSVTSGDSPAASPQAIPGFDAQTSDTPSSAFGPAFDDGRPSPPRYIVTSALDSTIRLWETSSGRCLRTFFGHLEGVWALAADTLRIVSGAEDRMVKIWDPRTGKCERTFTGHSGPVTCIGLGDSRFATGSEDCEVRMYSFQT</sequence>
<feature type="chain" id="PRO_0000397253" description="Probable E3 ubiquitin ligase complex SCF subunit sconB">
    <location>
        <begin position="1"/>
        <end position="689"/>
    </location>
</feature>
<feature type="domain" description="F-box" evidence="2">
    <location>
        <begin position="186"/>
        <end position="232"/>
    </location>
</feature>
<feature type="repeat" description="WD 1">
    <location>
        <begin position="358"/>
        <end position="395"/>
    </location>
</feature>
<feature type="repeat" description="WD 2">
    <location>
        <begin position="398"/>
        <end position="437"/>
    </location>
</feature>
<feature type="repeat" description="WD 3">
    <location>
        <begin position="439"/>
        <end position="475"/>
    </location>
</feature>
<feature type="repeat" description="WD 4">
    <location>
        <begin position="477"/>
        <end position="518"/>
    </location>
</feature>
<feature type="repeat" description="WD 5">
    <location>
        <begin position="572"/>
        <end position="615"/>
    </location>
</feature>
<feature type="repeat" description="WD 6">
    <location>
        <begin position="616"/>
        <end position="655"/>
    </location>
</feature>
<feature type="repeat" description="WD 7">
    <location>
        <begin position="658"/>
        <end position="689"/>
    </location>
</feature>
<feature type="region of interest" description="Disordered" evidence="3">
    <location>
        <begin position="1"/>
        <end position="66"/>
    </location>
</feature>
<feature type="region of interest" description="Disordered" evidence="3">
    <location>
        <begin position="267"/>
        <end position="306"/>
    </location>
</feature>
<feature type="compositionally biased region" description="Basic and acidic residues" evidence="3">
    <location>
        <begin position="1"/>
        <end position="12"/>
    </location>
</feature>
<feature type="compositionally biased region" description="Basic and acidic residues" evidence="3">
    <location>
        <begin position="19"/>
        <end position="29"/>
    </location>
</feature>
<feature type="compositionally biased region" description="Polar residues" evidence="3">
    <location>
        <begin position="276"/>
        <end position="291"/>
    </location>
</feature>
<feature type="compositionally biased region" description="Basic and acidic residues" evidence="3">
    <location>
        <begin position="295"/>
        <end position="306"/>
    </location>
</feature>
<dbReference type="EMBL" id="DS027696">
    <property type="protein sequence ID" value="EAW18973.1"/>
    <property type="molecule type" value="Genomic_DNA"/>
</dbReference>
<dbReference type="RefSeq" id="XP_001260870.1">
    <property type="nucleotide sequence ID" value="XM_001260869.1"/>
</dbReference>
<dbReference type="SMR" id="A1DHW6"/>
<dbReference type="STRING" id="331117.A1DHW6"/>
<dbReference type="EnsemblFungi" id="EAW18973">
    <property type="protein sequence ID" value="EAW18973"/>
    <property type="gene ID" value="NFIA_089300"/>
</dbReference>
<dbReference type="GeneID" id="4587428"/>
<dbReference type="KEGG" id="nfi:NFIA_089300"/>
<dbReference type="VEuPathDB" id="FungiDB:NFIA_089300"/>
<dbReference type="eggNOG" id="KOG0274">
    <property type="taxonomic scope" value="Eukaryota"/>
</dbReference>
<dbReference type="HOGENOM" id="CLU_000288_103_1_1"/>
<dbReference type="OMA" id="GIAHVWS"/>
<dbReference type="OrthoDB" id="5580488at2759"/>
<dbReference type="UniPathway" id="UPA00143"/>
<dbReference type="Proteomes" id="UP000006702">
    <property type="component" value="Unassembled WGS sequence"/>
</dbReference>
<dbReference type="GO" id="GO:0016567">
    <property type="term" value="P:protein ubiquitination"/>
    <property type="evidence" value="ECO:0007669"/>
    <property type="project" value="UniProtKB-UniPathway"/>
</dbReference>
<dbReference type="CDD" id="cd22147">
    <property type="entry name" value="F-box_SpPof1-like"/>
    <property type="match status" value="1"/>
</dbReference>
<dbReference type="CDD" id="cd00200">
    <property type="entry name" value="WD40"/>
    <property type="match status" value="1"/>
</dbReference>
<dbReference type="FunFam" id="1.20.1280.50:FF:000016">
    <property type="entry name" value="E3 ubiquitin ligase complex SCF subunit sconB"/>
    <property type="match status" value="1"/>
</dbReference>
<dbReference type="FunFam" id="2.130.10.10:FF:000770">
    <property type="entry name" value="E3 ubiquitin ligase complex SCF subunit sconB"/>
    <property type="match status" value="1"/>
</dbReference>
<dbReference type="FunFam" id="2.130.10.10:FF:000890">
    <property type="entry name" value="Probable E3 ubiquitin ligase complex SCF subunit sconB"/>
    <property type="match status" value="1"/>
</dbReference>
<dbReference type="Gene3D" id="1.20.1280.50">
    <property type="match status" value="1"/>
</dbReference>
<dbReference type="Gene3D" id="2.130.10.10">
    <property type="entry name" value="YVTN repeat-like/Quinoprotein amine dehydrogenase"/>
    <property type="match status" value="2"/>
</dbReference>
<dbReference type="InterPro" id="IPR036047">
    <property type="entry name" value="F-box-like_dom_sf"/>
</dbReference>
<dbReference type="InterPro" id="IPR001810">
    <property type="entry name" value="F-box_dom"/>
</dbReference>
<dbReference type="InterPro" id="IPR020472">
    <property type="entry name" value="G-protein_beta_WD-40_rep"/>
</dbReference>
<dbReference type="InterPro" id="IPR011047">
    <property type="entry name" value="Quinoprotein_ADH-like_sf"/>
</dbReference>
<dbReference type="InterPro" id="IPR051075">
    <property type="entry name" value="SCF_subunit_WD-repeat"/>
</dbReference>
<dbReference type="InterPro" id="IPR015943">
    <property type="entry name" value="WD40/YVTN_repeat-like_dom_sf"/>
</dbReference>
<dbReference type="InterPro" id="IPR019775">
    <property type="entry name" value="WD40_repeat_CS"/>
</dbReference>
<dbReference type="InterPro" id="IPR001680">
    <property type="entry name" value="WD40_rpt"/>
</dbReference>
<dbReference type="PANTHER" id="PTHR19872">
    <property type="entry name" value="UBIQUITIN LIGASE SPECIFICITY FACTOR/HREP PROTEIN"/>
    <property type="match status" value="1"/>
</dbReference>
<dbReference type="PANTHER" id="PTHR19872:SF9">
    <property type="entry name" value="UBIQUITIN-BINDING SDF UBIQUITIN LIGASE COMPLEX SUBUNIT"/>
    <property type="match status" value="1"/>
</dbReference>
<dbReference type="Pfam" id="PF12937">
    <property type="entry name" value="F-box-like"/>
    <property type="match status" value="1"/>
</dbReference>
<dbReference type="Pfam" id="PF00400">
    <property type="entry name" value="WD40"/>
    <property type="match status" value="6"/>
</dbReference>
<dbReference type="PRINTS" id="PR00320">
    <property type="entry name" value="GPROTEINBRPT"/>
</dbReference>
<dbReference type="SMART" id="SM00256">
    <property type="entry name" value="FBOX"/>
    <property type="match status" value="1"/>
</dbReference>
<dbReference type="SMART" id="SM00320">
    <property type="entry name" value="WD40"/>
    <property type="match status" value="7"/>
</dbReference>
<dbReference type="SUPFAM" id="SSF81383">
    <property type="entry name" value="F-box domain"/>
    <property type="match status" value="1"/>
</dbReference>
<dbReference type="SUPFAM" id="SSF50998">
    <property type="entry name" value="Quinoprotein alcohol dehydrogenase-like"/>
    <property type="match status" value="1"/>
</dbReference>
<dbReference type="PROSITE" id="PS50181">
    <property type="entry name" value="FBOX"/>
    <property type="match status" value="1"/>
</dbReference>
<dbReference type="PROSITE" id="PS00678">
    <property type="entry name" value="WD_REPEATS_1"/>
    <property type="match status" value="4"/>
</dbReference>
<dbReference type="PROSITE" id="PS50082">
    <property type="entry name" value="WD_REPEATS_2"/>
    <property type="match status" value="7"/>
</dbReference>
<dbReference type="PROSITE" id="PS50294">
    <property type="entry name" value="WD_REPEATS_REGION"/>
    <property type="match status" value="1"/>
</dbReference>